<feature type="chain" id="PRO_0000291020" description="NAD(P)H dehydrogenase (quinone)">
    <location>
        <begin position="1"/>
        <end position="199"/>
    </location>
</feature>
<feature type="domain" description="Flavodoxin-like" evidence="1">
    <location>
        <begin position="4"/>
        <end position="190"/>
    </location>
</feature>
<feature type="binding site" evidence="1">
    <location>
        <begin position="10"/>
        <end position="15"/>
    </location>
    <ligand>
        <name>FMN</name>
        <dbReference type="ChEBI" id="CHEBI:58210"/>
    </ligand>
</feature>
<feature type="binding site" evidence="1">
    <location>
        <position position="12"/>
    </location>
    <ligand>
        <name>NAD(+)</name>
        <dbReference type="ChEBI" id="CHEBI:57540"/>
    </ligand>
</feature>
<feature type="binding site" evidence="1">
    <location>
        <begin position="78"/>
        <end position="80"/>
    </location>
    <ligand>
        <name>FMN</name>
        <dbReference type="ChEBI" id="CHEBI:58210"/>
    </ligand>
</feature>
<feature type="binding site" evidence="1">
    <location>
        <position position="98"/>
    </location>
    <ligand>
        <name>substrate</name>
    </ligand>
</feature>
<feature type="binding site" evidence="1">
    <location>
        <begin position="113"/>
        <end position="119"/>
    </location>
    <ligand>
        <name>FMN</name>
        <dbReference type="ChEBI" id="CHEBI:58210"/>
    </ligand>
</feature>
<feature type="binding site" evidence="1">
    <location>
        <position position="134"/>
    </location>
    <ligand>
        <name>FMN</name>
        <dbReference type="ChEBI" id="CHEBI:58210"/>
    </ligand>
</feature>
<sequence length="199" mass="20670">MAKVLVLYYSAYGHIEAMANAVADGARQAGATVDVKRVPELVPEAVAKAKYFKLDQAAPLAKVDDLADYDAIVVGTGTRFGRMSSQMASFLDQAGGLWARGALHGKVGGAFSSSATQHGGQETTLFSIITNLLHFGMTIVGLNYGFAGQMGVKEVTGGAPYGATTIADGDGSRPPSENELAGARYQGRMIAETAAKLHG</sequence>
<comment type="catalytic activity">
    <reaction evidence="1">
        <text>a quinone + NADH + H(+) = a quinol + NAD(+)</text>
        <dbReference type="Rhea" id="RHEA:46160"/>
        <dbReference type="ChEBI" id="CHEBI:15378"/>
        <dbReference type="ChEBI" id="CHEBI:24646"/>
        <dbReference type="ChEBI" id="CHEBI:57540"/>
        <dbReference type="ChEBI" id="CHEBI:57945"/>
        <dbReference type="ChEBI" id="CHEBI:132124"/>
        <dbReference type="EC" id="1.6.5.2"/>
    </reaction>
</comment>
<comment type="catalytic activity">
    <reaction evidence="1">
        <text>a quinone + NADPH + H(+) = a quinol + NADP(+)</text>
        <dbReference type="Rhea" id="RHEA:46164"/>
        <dbReference type="ChEBI" id="CHEBI:15378"/>
        <dbReference type="ChEBI" id="CHEBI:24646"/>
        <dbReference type="ChEBI" id="CHEBI:57783"/>
        <dbReference type="ChEBI" id="CHEBI:58349"/>
        <dbReference type="ChEBI" id="CHEBI:132124"/>
        <dbReference type="EC" id="1.6.5.2"/>
    </reaction>
</comment>
<comment type="cofactor">
    <cofactor evidence="1">
        <name>FMN</name>
        <dbReference type="ChEBI" id="CHEBI:58210"/>
    </cofactor>
    <text evidence="1">Binds 1 FMN per monomer.</text>
</comment>
<comment type="similarity">
    <text evidence="1">Belongs to the WrbA family.</text>
</comment>
<gene>
    <name type="ordered locus">Nwi_0978</name>
</gene>
<accession>Q3SU01</accession>
<reference key="1">
    <citation type="journal article" date="2006" name="Appl. Environ. Microbiol.">
        <title>Genome sequence of the chemolithoautotrophic nitrite-oxidizing bacterium Nitrobacter winogradskyi Nb-255.</title>
        <authorList>
            <person name="Starkenburg S.R."/>
            <person name="Chain P.S.G."/>
            <person name="Sayavedra-Soto L.A."/>
            <person name="Hauser L."/>
            <person name="Land M.L."/>
            <person name="Larimer F.W."/>
            <person name="Malfatti S.A."/>
            <person name="Klotz M.G."/>
            <person name="Bottomley P.J."/>
            <person name="Arp D.J."/>
            <person name="Hickey W.J."/>
        </authorList>
    </citation>
    <scope>NUCLEOTIDE SEQUENCE [LARGE SCALE GENOMIC DNA]</scope>
    <source>
        <strain>ATCC 25391 / DSM 10237 / CIP 104748 / NCIMB 11846 / Nb-255</strain>
    </source>
</reference>
<name>NQOR_NITWN</name>
<dbReference type="EC" id="1.6.5.2" evidence="1"/>
<dbReference type="EMBL" id="CP000115">
    <property type="protein sequence ID" value="ABA04240.1"/>
    <property type="molecule type" value="Genomic_DNA"/>
</dbReference>
<dbReference type="RefSeq" id="WP_011314279.1">
    <property type="nucleotide sequence ID" value="NC_007406.1"/>
</dbReference>
<dbReference type="SMR" id="Q3SU01"/>
<dbReference type="STRING" id="323098.Nwi_0978"/>
<dbReference type="KEGG" id="nwi:Nwi_0978"/>
<dbReference type="eggNOG" id="COG0655">
    <property type="taxonomic scope" value="Bacteria"/>
</dbReference>
<dbReference type="HOGENOM" id="CLU_051402_0_2_5"/>
<dbReference type="OrthoDB" id="9801479at2"/>
<dbReference type="Proteomes" id="UP000002531">
    <property type="component" value="Chromosome"/>
</dbReference>
<dbReference type="GO" id="GO:0016020">
    <property type="term" value="C:membrane"/>
    <property type="evidence" value="ECO:0007669"/>
    <property type="project" value="TreeGrafter"/>
</dbReference>
<dbReference type="GO" id="GO:0050660">
    <property type="term" value="F:flavin adenine dinucleotide binding"/>
    <property type="evidence" value="ECO:0007669"/>
    <property type="project" value="UniProtKB-UniRule"/>
</dbReference>
<dbReference type="GO" id="GO:0010181">
    <property type="term" value="F:FMN binding"/>
    <property type="evidence" value="ECO:0007669"/>
    <property type="project" value="InterPro"/>
</dbReference>
<dbReference type="GO" id="GO:0051287">
    <property type="term" value="F:NAD binding"/>
    <property type="evidence" value="ECO:0007669"/>
    <property type="project" value="UniProtKB-UniRule"/>
</dbReference>
<dbReference type="GO" id="GO:0050136">
    <property type="term" value="F:NADH:ubiquinone reductase (non-electrogenic) activity"/>
    <property type="evidence" value="ECO:0007669"/>
    <property type="project" value="RHEA"/>
</dbReference>
<dbReference type="GO" id="GO:0050661">
    <property type="term" value="F:NADP binding"/>
    <property type="evidence" value="ECO:0007669"/>
    <property type="project" value="UniProtKB-UniRule"/>
</dbReference>
<dbReference type="GO" id="GO:0008753">
    <property type="term" value="F:NADPH dehydrogenase (quinone) activity"/>
    <property type="evidence" value="ECO:0007669"/>
    <property type="project" value="RHEA"/>
</dbReference>
<dbReference type="FunFam" id="3.40.50.360:FF:000001">
    <property type="entry name" value="NAD(P)H dehydrogenase (Quinone) FQR1-like"/>
    <property type="match status" value="1"/>
</dbReference>
<dbReference type="Gene3D" id="3.40.50.360">
    <property type="match status" value="1"/>
</dbReference>
<dbReference type="HAMAP" id="MF_01017">
    <property type="entry name" value="NQOR"/>
    <property type="match status" value="1"/>
</dbReference>
<dbReference type="InterPro" id="IPR008254">
    <property type="entry name" value="Flavodoxin/NO_synth"/>
</dbReference>
<dbReference type="InterPro" id="IPR029039">
    <property type="entry name" value="Flavoprotein-like_sf"/>
</dbReference>
<dbReference type="InterPro" id="IPR010089">
    <property type="entry name" value="Flavoprotein_WrbA-like"/>
</dbReference>
<dbReference type="InterPro" id="IPR005025">
    <property type="entry name" value="FMN_Rdtase-like_dom"/>
</dbReference>
<dbReference type="InterPro" id="IPR037513">
    <property type="entry name" value="NQO"/>
</dbReference>
<dbReference type="NCBIfam" id="TIGR01755">
    <property type="entry name" value="flav_wrbA"/>
    <property type="match status" value="1"/>
</dbReference>
<dbReference type="NCBIfam" id="NF002999">
    <property type="entry name" value="PRK03767.1"/>
    <property type="match status" value="1"/>
</dbReference>
<dbReference type="PANTHER" id="PTHR30546">
    <property type="entry name" value="FLAVODOXIN-RELATED PROTEIN WRBA-RELATED"/>
    <property type="match status" value="1"/>
</dbReference>
<dbReference type="PANTHER" id="PTHR30546:SF23">
    <property type="entry name" value="FLAVOPROTEIN-LIKE PROTEIN YCP4-RELATED"/>
    <property type="match status" value="1"/>
</dbReference>
<dbReference type="Pfam" id="PF03358">
    <property type="entry name" value="FMN_red"/>
    <property type="match status" value="1"/>
</dbReference>
<dbReference type="SUPFAM" id="SSF52218">
    <property type="entry name" value="Flavoproteins"/>
    <property type="match status" value="1"/>
</dbReference>
<dbReference type="PROSITE" id="PS50902">
    <property type="entry name" value="FLAVODOXIN_LIKE"/>
    <property type="match status" value="1"/>
</dbReference>
<proteinExistence type="inferred from homology"/>
<keyword id="KW-0285">Flavoprotein</keyword>
<keyword id="KW-0288">FMN</keyword>
<keyword id="KW-0520">NAD</keyword>
<keyword id="KW-0521">NADP</keyword>
<keyword id="KW-0547">Nucleotide-binding</keyword>
<keyword id="KW-0560">Oxidoreductase</keyword>
<keyword id="KW-1185">Reference proteome</keyword>
<organism>
    <name type="scientific">Nitrobacter winogradskyi (strain ATCC 25391 / DSM 10237 / CIP 104748 / NCIMB 11846 / Nb-255)</name>
    <dbReference type="NCBI Taxonomy" id="323098"/>
    <lineage>
        <taxon>Bacteria</taxon>
        <taxon>Pseudomonadati</taxon>
        <taxon>Pseudomonadota</taxon>
        <taxon>Alphaproteobacteria</taxon>
        <taxon>Hyphomicrobiales</taxon>
        <taxon>Nitrobacteraceae</taxon>
        <taxon>Nitrobacter</taxon>
    </lineage>
</organism>
<protein>
    <recommendedName>
        <fullName evidence="1">NAD(P)H dehydrogenase (quinone)</fullName>
        <ecNumber evidence="1">1.6.5.2</ecNumber>
    </recommendedName>
    <alternativeName>
        <fullName>Flavoprotein WrbA</fullName>
    </alternativeName>
    <alternativeName>
        <fullName evidence="1">NAD(P)H:quinone oxidoreductase</fullName>
        <shortName evidence="1">NQO</shortName>
    </alternativeName>
</protein>
<evidence type="ECO:0000255" key="1">
    <source>
        <dbReference type="HAMAP-Rule" id="MF_01017"/>
    </source>
</evidence>